<reference key="1">
    <citation type="journal article" date="2005" name="Nat. Biotechnol.">
        <title>Complete genome sequence of the plant commensal Pseudomonas fluorescens Pf-5.</title>
        <authorList>
            <person name="Paulsen I.T."/>
            <person name="Press C.M."/>
            <person name="Ravel J."/>
            <person name="Kobayashi D.Y."/>
            <person name="Myers G.S.A."/>
            <person name="Mavrodi D.V."/>
            <person name="DeBoy R.T."/>
            <person name="Seshadri R."/>
            <person name="Ren Q."/>
            <person name="Madupu R."/>
            <person name="Dodson R.J."/>
            <person name="Durkin A.S."/>
            <person name="Brinkac L.M."/>
            <person name="Daugherty S.C."/>
            <person name="Sullivan S.A."/>
            <person name="Rosovitz M.J."/>
            <person name="Gwinn M.L."/>
            <person name="Zhou L."/>
            <person name="Schneider D.J."/>
            <person name="Cartinhour S.W."/>
            <person name="Nelson W.C."/>
            <person name="Weidman J."/>
            <person name="Watkins K."/>
            <person name="Tran K."/>
            <person name="Khouri H."/>
            <person name="Pierson E.A."/>
            <person name="Pierson L.S. III"/>
            <person name="Thomashow L.S."/>
            <person name="Loper J.E."/>
        </authorList>
    </citation>
    <scope>NUCLEOTIDE SEQUENCE [LARGE SCALE GENOMIC DNA]</scope>
    <source>
        <strain>ATCC BAA-477 / NRRL B-23932 / Pf-5</strain>
    </source>
</reference>
<evidence type="ECO:0000255" key="1">
    <source>
        <dbReference type="HAMAP-Rule" id="MF_01631"/>
    </source>
</evidence>
<name>GLMU_PSEF5</name>
<gene>
    <name evidence="1" type="primary">glmU</name>
    <name type="ordered locus">PFL_6214</name>
</gene>
<keyword id="KW-0012">Acyltransferase</keyword>
<keyword id="KW-0133">Cell shape</keyword>
<keyword id="KW-0961">Cell wall biogenesis/degradation</keyword>
<keyword id="KW-0963">Cytoplasm</keyword>
<keyword id="KW-0460">Magnesium</keyword>
<keyword id="KW-0479">Metal-binding</keyword>
<keyword id="KW-0511">Multifunctional enzyme</keyword>
<keyword id="KW-0548">Nucleotidyltransferase</keyword>
<keyword id="KW-0573">Peptidoglycan synthesis</keyword>
<keyword id="KW-0677">Repeat</keyword>
<keyword id="KW-0808">Transferase</keyword>
<protein>
    <recommendedName>
        <fullName evidence="1">Bifunctional protein GlmU</fullName>
    </recommendedName>
    <domain>
        <recommendedName>
            <fullName evidence="1">UDP-N-acetylglucosamine pyrophosphorylase</fullName>
            <ecNumber evidence="1">2.7.7.23</ecNumber>
        </recommendedName>
        <alternativeName>
            <fullName evidence="1">N-acetylglucosamine-1-phosphate uridyltransferase</fullName>
        </alternativeName>
    </domain>
    <domain>
        <recommendedName>
            <fullName evidence="1">Glucosamine-1-phosphate N-acetyltransferase</fullName>
            <ecNumber evidence="1">2.3.1.157</ecNumber>
        </recommendedName>
    </domain>
</protein>
<organism>
    <name type="scientific">Pseudomonas fluorescens (strain ATCC BAA-477 / NRRL B-23932 / Pf-5)</name>
    <dbReference type="NCBI Taxonomy" id="220664"/>
    <lineage>
        <taxon>Bacteria</taxon>
        <taxon>Pseudomonadati</taxon>
        <taxon>Pseudomonadota</taxon>
        <taxon>Gammaproteobacteria</taxon>
        <taxon>Pseudomonadales</taxon>
        <taxon>Pseudomonadaceae</taxon>
        <taxon>Pseudomonas</taxon>
    </lineage>
</organism>
<dbReference type="EC" id="2.7.7.23" evidence="1"/>
<dbReference type="EC" id="2.3.1.157" evidence="1"/>
<dbReference type="EMBL" id="CP000076">
    <property type="protein sequence ID" value="AAY95402.1"/>
    <property type="molecule type" value="Genomic_DNA"/>
</dbReference>
<dbReference type="RefSeq" id="WP_011064379.1">
    <property type="nucleotide sequence ID" value="NC_004129.6"/>
</dbReference>
<dbReference type="SMR" id="Q4K3B1"/>
<dbReference type="STRING" id="220664.PFL_6214"/>
<dbReference type="KEGG" id="pfl:PFL_6214"/>
<dbReference type="PATRIC" id="fig|220664.5.peg.6344"/>
<dbReference type="eggNOG" id="COG1207">
    <property type="taxonomic scope" value="Bacteria"/>
</dbReference>
<dbReference type="HOGENOM" id="CLU_029499_15_2_6"/>
<dbReference type="UniPathway" id="UPA00113">
    <property type="reaction ID" value="UER00532"/>
</dbReference>
<dbReference type="UniPathway" id="UPA00113">
    <property type="reaction ID" value="UER00533"/>
</dbReference>
<dbReference type="UniPathway" id="UPA00973"/>
<dbReference type="Proteomes" id="UP000008540">
    <property type="component" value="Chromosome"/>
</dbReference>
<dbReference type="GO" id="GO:0005737">
    <property type="term" value="C:cytoplasm"/>
    <property type="evidence" value="ECO:0007669"/>
    <property type="project" value="UniProtKB-SubCell"/>
</dbReference>
<dbReference type="GO" id="GO:0016020">
    <property type="term" value="C:membrane"/>
    <property type="evidence" value="ECO:0007669"/>
    <property type="project" value="GOC"/>
</dbReference>
<dbReference type="GO" id="GO:0019134">
    <property type="term" value="F:glucosamine-1-phosphate N-acetyltransferase activity"/>
    <property type="evidence" value="ECO:0007669"/>
    <property type="project" value="UniProtKB-UniRule"/>
</dbReference>
<dbReference type="GO" id="GO:0000287">
    <property type="term" value="F:magnesium ion binding"/>
    <property type="evidence" value="ECO:0007669"/>
    <property type="project" value="UniProtKB-UniRule"/>
</dbReference>
<dbReference type="GO" id="GO:0003977">
    <property type="term" value="F:UDP-N-acetylglucosamine diphosphorylase activity"/>
    <property type="evidence" value="ECO:0007669"/>
    <property type="project" value="UniProtKB-UniRule"/>
</dbReference>
<dbReference type="GO" id="GO:0000902">
    <property type="term" value="P:cell morphogenesis"/>
    <property type="evidence" value="ECO:0007669"/>
    <property type="project" value="UniProtKB-UniRule"/>
</dbReference>
<dbReference type="GO" id="GO:0071555">
    <property type="term" value="P:cell wall organization"/>
    <property type="evidence" value="ECO:0007669"/>
    <property type="project" value="UniProtKB-KW"/>
</dbReference>
<dbReference type="GO" id="GO:0009245">
    <property type="term" value="P:lipid A biosynthetic process"/>
    <property type="evidence" value="ECO:0007669"/>
    <property type="project" value="UniProtKB-UniRule"/>
</dbReference>
<dbReference type="GO" id="GO:0009252">
    <property type="term" value="P:peptidoglycan biosynthetic process"/>
    <property type="evidence" value="ECO:0007669"/>
    <property type="project" value="UniProtKB-UniRule"/>
</dbReference>
<dbReference type="GO" id="GO:0008360">
    <property type="term" value="P:regulation of cell shape"/>
    <property type="evidence" value="ECO:0007669"/>
    <property type="project" value="UniProtKB-KW"/>
</dbReference>
<dbReference type="GO" id="GO:0006048">
    <property type="term" value="P:UDP-N-acetylglucosamine biosynthetic process"/>
    <property type="evidence" value="ECO:0007669"/>
    <property type="project" value="UniProtKB-UniPathway"/>
</dbReference>
<dbReference type="CDD" id="cd02540">
    <property type="entry name" value="GT2_GlmU_N_bac"/>
    <property type="match status" value="1"/>
</dbReference>
<dbReference type="CDD" id="cd03353">
    <property type="entry name" value="LbH_GlmU_C"/>
    <property type="match status" value="1"/>
</dbReference>
<dbReference type="Gene3D" id="2.160.10.10">
    <property type="entry name" value="Hexapeptide repeat proteins"/>
    <property type="match status" value="1"/>
</dbReference>
<dbReference type="Gene3D" id="3.90.550.10">
    <property type="entry name" value="Spore Coat Polysaccharide Biosynthesis Protein SpsA, Chain A"/>
    <property type="match status" value="1"/>
</dbReference>
<dbReference type="HAMAP" id="MF_01631">
    <property type="entry name" value="GlmU"/>
    <property type="match status" value="1"/>
</dbReference>
<dbReference type="InterPro" id="IPR005882">
    <property type="entry name" value="Bifunctional_GlmU"/>
</dbReference>
<dbReference type="InterPro" id="IPR050065">
    <property type="entry name" value="GlmU-like"/>
</dbReference>
<dbReference type="InterPro" id="IPR038009">
    <property type="entry name" value="GlmU_C_LbH"/>
</dbReference>
<dbReference type="InterPro" id="IPR001451">
    <property type="entry name" value="Hexapep"/>
</dbReference>
<dbReference type="InterPro" id="IPR025877">
    <property type="entry name" value="MobA-like_NTP_Trfase"/>
</dbReference>
<dbReference type="InterPro" id="IPR029044">
    <property type="entry name" value="Nucleotide-diphossugar_trans"/>
</dbReference>
<dbReference type="InterPro" id="IPR011004">
    <property type="entry name" value="Trimer_LpxA-like_sf"/>
</dbReference>
<dbReference type="NCBIfam" id="TIGR01173">
    <property type="entry name" value="glmU"/>
    <property type="match status" value="1"/>
</dbReference>
<dbReference type="PANTHER" id="PTHR43584:SF3">
    <property type="entry name" value="BIFUNCTIONAL PROTEIN GLMU"/>
    <property type="match status" value="1"/>
</dbReference>
<dbReference type="PANTHER" id="PTHR43584">
    <property type="entry name" value="NUCLEOTIDYL TRANSFERASE"/>
    <property type="match status" value="1"/>
</dbReference>
<dbReference type="Pfam" id="PF00132">
    <property type="entry name" value="Hexapep"/>
    <property type="match status" value="1"/>
</dbReference>
<dbReference type="Pfam" id="PF14602">
    <property type="entry name" value="Hexapep_2"/>
    <property type="match status" value="1"/>
</dbReference>
<dbReference type="Pfam" id="PF12804">
    <property type="entry name" value="NTP_transf_3"/>
    <property type="match status" value="1"/>
</dbReference>
<dbReference type="SUPFAM" id="SSF53448">
    <property type="entry name" value="Nucleotide-diphospho-sugar transferases"/>
    <property type="match status" value="1"/>
</dbReference>
<dbReference type="SUPFAM" id="SSF51161">
    <property type="entry name" value="Trimeric LpxA-like enzymes"/>
    <property type="match status" value="1"/>
</dbReference>
<proteinExistence type="inferred from homology"/>
<sequence length="455" mass="48573">MSLEIVILAAGQGTRMRSALPKVLHPVAGNSMLGHVIHSARQLDPQRIHVVIGHGADAVRERLDADDLNFVLQDKQLGTGHAVAQAVPFITADTVLILYGDVPLIEVETLQRLLKQVGPEQLGLLTVELDDPTGYGRIVRDADGKVVAIVEQKDADEATRAITEGNTGILAVPGKRLGDWTGRLSNNNAQGEYYLTDVIAMAVSDGLIVATEQPHDAMEVQGANDRKQLAELERHYQLRAGRRLMAQGVTLRDPARFDVRGEVIVGRDVLIDINVILEGRVVIEDDVIIGPNCVIKDSTLRKGAVIKANSHLDGAVMGEGSDAGPFARLRPGTVLEARAHVGNFVELKNAHLGQGAKAGHLTYLGDAVIGARTNIGAGTITCNYDGVNKHKTIMGEDVFIGSNNSLVAPVDISSGATTAAGSTITQDVAPAQLAVGRARQKNIDGWKRPEKIKKD</sequence>
<feature type="chain" id="PRO_0000233822" description="Bifunctional protein GlmU">
    <location>
        <begin position="1"/>
        <end position="455"/>
    </location>
</feature>
<feature type="region of interest" description="Pyrophosphorylase" evidence="1">
    <location>
        <begin position="1"/>
        <end position="226"/>
    </location>
</feature>
<feature type="region of interest" description="Linker" evidence="1">
    <location>
        <begin position="227"/>
        <end position="247"/>
    </location>
</feature>
<feature type="region of interest" description="N-acetyltransferase" evidence="1">
    <location>
        <begin position="248"/>
        <end position="455"/>
    </location>
</feature>
<feature type="active site" description="Proton acceptor" evidence="1">
    <location>
        <position position="360"/>
    </location>
</feature>
<feature type="binding site" evidence="1">
    <location>
        <begin position="8"/>
        <end position="11"/>
    </location>
    <ligand>
        <name>UDP-N-acetyl-alpha-D-glucosamine</name>
        <dbReference type="ChEBI" id="CHEBI:57705"/>
    </ligand>
</feature>
<feature type="binding site" evidence="1">
    <location>
        <position position="22"/>
    </location>
    <ligand>
        <name>UDP-N-acetyl-alpha-D-glucosamine</name>
        <dbReference type="ChEBI" id="CHEBI:57705"/>
    </ligand>
</feature>
<feature type="binding site" evidence="1">
    <location>
        <position position="73"/>
    </location>
    <ligand>
        <name>UDP-N-acetyl-alpha-D-glucosamine</name>
        <dbReference type="ChEBI" id="CHEBI:57705"/>
    </ligand>
</feature>
<feature type="binding site" evidence="1">
    <location>
        <begin position="78"/>
        <end position="79"/>
    </location>
    <ligand>
        <name>UDP-N-acetyl-alpha-D-glucosamine</name>
        <dbReference type="ChEBI" id="CHEBI:57705"/>
    </ligand>
</feature>
<feature type="binding site" evidence="1">
    <location>
        <begin position="99"/>
        <end position="101"/>
    </location>
    <ligand>
        <name>UDP-N-acetyl-alpha-D-glucosamine</name>
        <dbReference type="ChEBI" id="CHEBI:57705"/>
    </ligand>
</feature>
<feature type="binding site" evidence="1">
    <location>
        <position position="101"/>
    </location>
    <ligand>
        <name>Mg(2+)</name>
        <dbReference type="ChEBI" id="CHEBI:18420"/>
    </ligand>
</feature>
<feature type="binding site" evidence="1">
    <location>
        <position position="136"/>
    </location>
    <ligand>
        <name>UDP-N-acetyl-alpha-D-glucosamine</name>
        <dbReference type="ChEBI" id="CHEBI:57705"/>
    </ligand>
</feature>
<feature type="binding site" evidence="1">
    <location>
        <position position="151"/>
    </location>
    <ligand>
        <name>UDP-N-acetyl-alpha-D-glucosamine</name>
        <dbReference type="ChEBI" id="CHEBI:57705"/>
    </ligand>
</feature>
<feature type="binding site" evidence="1">
    <location>
        <position position="166"/>
    </location>
    <ligand>
        <name>UDP-N-acetyl-alpha-D-glucosamine</name>
        <dbReference type="ChEBI" id="CHEBI:57705"/>
    </ligand>
</feature>
<feature type="binding site" evidence="1">
    <location>
        <position position="224"/>
    </location>
    <ligand>
        <name>Mg(2+)</name>
        <dbReference type="ChEBI" id="CHEBI:18420"/>
    </ligand>
</feature>
<feature type="binding site" evidence="1">
    <location>
        <position position="224"/>
    </location>
    <ligand>
        <name>UDP-N-acetyl-alpha-D-glucosamine</name>
        <dbReference type="ChEBI" id="CHEBI:57705"/>
    </ligand>
</feature>
<feature type="binding site" evidence="1">
    <location>
        <position position="330"/>
    </location>
    <ligand>
        <name>UDP-N-acetyl-alpha-D-glucosamine</name>
        <dbReference type="ChEBI" id="CHEBI:57705"/>
    </ligand>
</feature>
<feature type="binding site" evidence="1">
    <location>
        <position position="348"/>
    </location>
    <ligand>
        <name>UDP-N-acetyl-alpha-D-glucosamine</name>
        <dbReference type="ChEBI" id="CHEBI:57705"/>
    </ligand>
</feature>
<feature type="binding site" evidence="1">
    <location>
        <position position="363"/>
    </location>
    <ligand>
        <name>UDP-N-acetyl-alpha-D-glucosamine</name>
        <dbReference type="ChEBI" id="CHEBI:57705"/>
    </ligand>
</feature>
<feature type="binding site" evidence="1">
    <location>
        <position position="374"/>
    </location>
    <ligand>
        <name>UDP-N-acetyl-alpha-D-glucosamine</name>
        <dbReference type="ChEBI" id="CHEBI:57705"/>
    </ligand>
</feature>
<feature type="binding site" evidence="1">
    <location>
        <position position="377"/>
    </location>
    <ligand>
        <name>acetyl-CoA</name>
        <dbReference type="ChEBI" id="CHEBI:57288"/>
    </ligand>
</feature>
<feature type="binding site" evidence="1">
    <location>
        <begin position="383"/>
        <end position="384"/>
    </location>
    <ligand>
        <name>acetyl-CoA</name>
        <dbReference type="ChEBI" id="CHEBI:57288"/>
    </ligand>
</feature>
<feature type="binding site" evidence="1">
    <location>
        <position position="402"/>
    </location>
    <ligand>
        <name>acetyl-CoA</name>
        <dbReference type="ChEBI" id="CHEBI:57288"/>
    </ligand>
</feature>
<feature type="binding site" evidence="1">
    <location>
        <position position="420"/>
    </location>
    <ligand>
        <name>acetyl-CoA</name>
        <dbReference type="ChEBI" id="CHEBI:57288"/>
    </ligand>
</feature>
<feature type="binding site" evidence="1">
    <location>
        <position position="437"/>
    </location>
    <ligand>
        <name>acetyl-CoA</name>
        <dbReference type="ChEBI" id="CHEBI:57288"/>
    </ligand>
</feature>
<comment type="function">
    <text evidence="1">Catalyzes the last two sequential reactions in the de novo biosynthetic pathway for UDP-N-acetylglucosamine (UDP-GlcNAc). The C-terminal domain catalyzes the transfer of acetyl group from acetyl coenzyme A to glucosamine-1-phosphate (GlcN-1-P) to produce N-acetylglucosamine-1-phosphate (GlcNAc-1-P), which is converted into UDP-GlcNAc by the transfer of uridine 5-monophosphate (from uridine 5-triphosphate), a reaction catalyzed by the N-terminal domain.</text>
</comment>
<comment type="catalytic activity">
    <reaction evidence="1">
        <text>alpha-D-glucosamine 1-phosphate + acetyl-CoA = N-acetyl-alpha-D-glucosamine 1-phosphate + CoA + H(+)</text>
        <dbReference type="Rhea" id="RHEA:13725"/>
        <dbReference type="ChEBI" id="CHEBI:15378"/>
        <dbReference type="ChEBI" id="CHEBI:57287"/>
        <dbReference type="ChEBI" id="CHEBI:57288"/>
        <dbReference type="ChEBI" id="CHEBI:57776"/>
        <dbReference type="ChEBI" id="CHEBI:58516"/>
        <dbReference type="EC" id="2.3.1.157"/>
    </reaction>
</comment>
<comment type="catalytic activity">
    <reaction evidence="1">
        <text>N-acetyl-alpha-D-glucosamine 1-phosphate + UTP + H(+) = UDP-N-acetyl-alpha-D-glucosamine + diphosphate</text>
        <dbReference type="Rhea" id="RHEA:13509"/>
        <dbReference type="ChEBI" id="CHEBI:15378"/>
        <dbReference type="ChEBI" id="CHEBI:33019"/>
        <dbReference type="ChEBI" id="CHEBI:46398"/>
        <dbReference type="ChEBI" id="CHEBI:57705"/>
        <dbReference type="ChEBI" id="CHEBI:57776"/>
        <dbReference type="EC" id="2.7.7.23"/>
    </reaction>
</comment>
<comment type="cofactor">
    <cofactor evidence="1">
        <name>Mg(2+)</name>
        <dbReference type="ChEBI" id="CHEBI:18420"/>
    </cofactor>
    <text evidence="1">Binds 1 Mg(2+) ion per subunit.</text>
</comment>
<comment type="pathway">
    <text evidence="1">Nucleotide-sugar biosynthesis; UDP-N-acetyl-alpha-D-glucosamine biosynthesis; N-acetyl-alpha-D-glucosamine 1-phosphate from alpha-D-glucosamine 6-phosphate (route II): step 2/2.</text>
</comment>
<comment type="pathway">
    <text evidence="1">Nucleotide-sugar biosynthesis; UDP-N-acetyl-alpha-D-glucosamine biosynthesis; UDP-N-acetyl-alpha-D-glucosamine from N-acetyl-alpha-D-glucosamine 1-phosphate: step 1/1.</text>
</comment>
<comment type="pathway">
    <text evidence="1">Bacterial outer membrane biogenesis; LPS lipid A biosynthesis.</text>
</comment>
<comment type="subunit">
    <text evidence="1">Homotrimer.</text>
</comment>
<comment type="subcellular location">
    <subcellularLocation>
        <location evidence="1">Cytoplasm</location>
    </subcellularLocation>
</comment>
<comment type="similarity">
    <text evidence="1">In the N-terminal section; belongs to the N-acetylglucosamine-1-phosphate uridyltransferase family.</text>
</comment>
<comment type="similarity">
    <text evidence="1">In the C-terminal section; belongs to the transferase hexapeptide repeat family.</text>
</comment>
<accession>Q4K3B1</accession>